<comment type="function">
    <text evidence="1">Involved in the biosynthesis of branched-chain amino acids (BCAA). Catalyzes an alkyl-migration followed by a ketol-acid reduction of (S)-2-acetolactate (S2AL) to yield (R)-2,3-dihydroxy-isovalerate. In the isomerase reaction, S2AL is rearranged via a Mg-dependent methyl migration to produce 3-hydroxy-3-methyl-2-ketobutyrate (HMKB). In the reductase reaction, this 2-ketoacid undergoes a metal-dependent reduction by NADPH to yield (R)-2,3-dihydroxy-isovalerate.</text>
</comment>
<comment type="catalytic activity">
    <reaction evidence="1">
        <text>(2R)-2,3-dihydroxy-3-methylbutanoate + NADP(+) = (2S)-2-acetolactate + NADPH + H(+)</text>
        <dbReference type="Rhea" id="RHEA:22068"/>
        <dbReference type="ChEBI" id="CHEBI:15378"/>
        <dbReference type="ChEBI" id="CHEBI:49072"/>
        <dbReference type="ChEBI" id="CHEBI:57783"/>
        <dbReference type="ChEBI" id="CHEBI:58349"/>
        <dbReference type="ChEBI" id="CHEBI:58476"/>
        <dbReference type="EC" id="1.1.1.86"/>
    </reaction>
</comment>
<comment type="catalytic activity">
    <reaction evidence="1">
        <text>(2R,3R)-2,3-dihydroxy-3-methylpentanoate + NADP(+) = (S)-2-ethyl-2-hydroxy-3-oxobutanoate + NADPH + H(+)</text>
        <dbReference type="Rhea" id="RHEA:13493"/>
        <dbReference type="ChEBI" id="CHEBI:15378"/>
        <dbReference type="ChEBI" id="CHEBI:49256"/>
        <dbReference type="ChEBI" id="CHEBI:49258"/>
        <dbReference type="ChEBI" id="CHEBI:57783"/>
        <dbReference type="ChEBI" id="CHEBI:58349"/>
        <dbReference type="EC" id="1.1.1.86"/>
    </reaction>
</comment>
<comment type="cofactor">
    <cofactor evidence="1">
        <name>Mg(2+)</name>
        <dbReference type="ChEBI" id="CHEBI:18420"/>
    </cofactor>
    <text evidence="1">Binds 2 magnesium ions per subunit.</text>
</comment>
<comment type="pathway">
    <text evidence="1">Amino-acid biosynthesis; L-isoleucine biosynthesis; L-isoleucine from 2-oxobutanoate: step 2/4.</text>
</comment>
<comment type="pathway">
    <text evidence="1">Amino-acid biosynthesis; L-valine biosynthesis; L-valine from pyruvate: step 2/4.</text>
</comment>
<comment type="similarity">
    <text evidence="1">Belongs to the ketol-acid reductoisomerase family.</text>
</comment>
<feature type="chain" id="PRO_1000190936" description="Ketol-acid reductoisomerase (NADP(+))">
    <location>
        <begin position="1"/>
        <end position="493"/>
    </location>
</feature>
<feature type="domain" description="KARI N-terminal Rossmann" evidence="2">
    <location>
        <begin position="17"/>
        <end position="208"/>
    </location>
</feature>
<feature type="domain" description="KARI C-terminal knotted 1" evidence="3">
    <location>
        <begin position="209"/>
        <end position="353"/>
    </location>
</feature>
<feature type="domain" description="KARI C-terminal knotted 2" evidence="3">
    <location>
        <begin position="354"/>
        <end position="486"/>
    </location>
</feature>
<feature type="active site" evidence="1">
    <location>
        <position position="132"/>
    </location>
</feature>
<feature type="binding site" evidence="1">
    <location>
        <begin position="45"/>
        <end position="48"/>
    </location>
    <ligand>
        <name>NADP(+)</name>
        <dbReference type="ChEBI" id="CHEBI:58349"/>
    </ligand>
</feature>
<feature type="binding site" evidence="1">
    <location>
        <position position="68"/>
    </location>
    <ligand>
        <name>NADP(+)</name>
        <dbReference type="ChEBI" id="CHEBI:58349"/>
    </ligand>
</feature>
<feature type="binding site" evidence="1">
    <location>
        <position position="76"/>
    </location>
    <ligand>
        <name>NADP(+)</name>
        <dbReference type="ChEBI" id="CHEBI:58349"/>
    </ligand>
</feature>
<feature type="binding site" evidence="1">
    <location>
        <position position="78"/>
    </location>
    <ligand>
        <name>NADP(+)</name>
        <dbReference type="ChEBI" id="CHEBI:58349"/>
    </ligand>
</feature>
<feature type="binding site" evidence="1">
    <location>
        <begin position="108"/>
        <end position="110"/>
    </location>
    <ligand>
        <name>NADP(+)</name>
        <dbReference type="ChEBI" id="CHEBI:58349"/>
    </ligand>
</feature>
<feature type="binding site" evidence="1">
    <location>
        <position position="158"/>
    </location>
    <ligand>
        <name>NADP(+)</name>
        <dbReference type="ChEBI" id="CHEBI:58349"/>
    </ligand>
</feature>
<feature type="binding site" evidence="1">
    <location>
        <position position="217"/>
    </location>
    <ligand>
        <name>Mg(2+)</name>
        <dbReference type="ChEBI" id="CHEBI:18420"/>
        <label>1</label>
    </ligand>
</feature>
<feature type="binding site" evidence="1">
    <location>
        <position position="217"/>
    </location>
    <ligand>
        <name>Mg(2+)</name>
        <dbReference type="ChEBI" id="CHEBI:18420"/>
        <label>2</label>
    </ligand>
</feature>
<feature type="binding site" evidence="1">
    <location>
        <position position="221"/>
    </location>
    <ligand>
        <name>Mg(2+)</name>
        <dbReference type="ChEBI" id="CHEBI:18420"/>
        <label>1</label>
    </ligand>
</feature>
<feature type="binding site" evidence="1">
    <location>
        <position position="389"/>
    </location>
    <ligand>
        <name>Mg(2+)</name>
        <dbReference type="ChEBI" id="CHEBI:18420"/>
        <label>2</label>
    </ligand>
</feature>
<feature type="binding site" evidence="1">
    <location>
        <position position="393"/>
    </location>
    <ligand>
        <name>Mg(2+)</name>
        <dbReference type="ChEBI" id="CHEBI:18420"/>
        <label>2</label>
    </ligand>
</feature>
<feature type="binding site" evidence="1">
    <location>
        <position position="414"/>
    </location>
    <ligand>
        <name>substrate</name>
    </ligand>
</feature>
<sequence>MSNYFNTLSLREKLGQLGKCRFMKREEFNDGCNFIKDWNIVIVGCGAQGLNQGLNMRDSGLNISYTLRDAAISEKRQSWQWATENGFTVGSYAELIPQADLVLNLTPDKQHTSAVTAVMPLMKQGATLAYSHGFNIVEEGMQIRSDITVVMVAPKCPGTEVREEYKRGFGVPTLIAVHPENDPQGNGLAIAKAYASATGGDRAGVLESSFIAEVKSDLMGEQTILCGMLQTAAVLGHKQLIAQGMDAAYARKLLQYGLETTTEGLKHGGITNMMDRLSNPAKILAFDMAEELKVILRPLFQKHMDDIIEGRFSATMMADWANDDVNLLTWRAETAETSFEKSPECDTEISEQEYYDKGIFVVAMIKAGVELAFDAMVDSGIINASAYYESLHETPLIANCIARNMLHEMNVVISDTAEYGNYLFTHAAVPLLADYTASLTLEQLGEGLKESSNNVDNARLIEVNEAIRSHGVEVIGKELRGYMTDMKKIASAK</sequence>
<organism>
    <name type="scientific">Colwellia psychrerythraea (strain 34H / ATCC BAA-681)</name>
    <name type="common">Vibrio psychroerythus</name>
    <dbReference type="NCBI Taxonomy" id="167879"/>
    <lineage>
        <taxon>Bacteria</taxon>
        <taxon>Pseudomonadati</taxon>
        <taxon>Pseudomonadota</taxon>
        <taxon>Gammaproteobacteria</taxon>
        <taxon>Alteromonadales</taxon>
        <taxon>Colwelliaceae</taxon>
        <taxon>Colwellia</taxon>
    </lineage>
</organism>
<protein>
    <recommendedName>
        <fullName evidence="1">Ketol-acid reductoisomerase (NADP(+))</fullName>
        <shortName evidence="1">KARI</shortName>
        <ecNumber evidence="1">1.1.1.86</ecNumber>
    </recommendedName>
    <alternativeName>
        <fullName evidence="1">Acetohydroxy-acid isomeroreductase</fullName>
        <shortName evidence="1">AHIR</shortName>
    </alternativeName>
    <alternativeName>
        <fullName evidence="1">Alpha-keto-beta-hydroxylacyl reductoisomerase</fullName>
    </alternativeName>
    <alternativeName>
        <fullName evidence="1">Ketol-acid reductoisomerase type 2</fullName>
    </alternativeName>
    <alternativeName>
        <fullName evidence="1">Ketol-acid reductoisomerase type II</fullName>
    </alternativeName>
</protein>
<name>ILVC_COLP3</name>
<dbReference type="EC" id="1.1.1.86" evidence="1"/>
<dbReference type="EMBL" id="CP000083">
    <property type="protein sequence ID" value="AAZ28265.1"/>
    <property type="molecule type" value="Genomic_DNA"/>
</dbReference>
<dbReference type="RefSeq" id="WP_011045558.1">
    <property type="nucleotide sequence ID" value="NC_003910.7"/>
</dbReference>
<dbReference type="SMR" id="Q47UP4"/>
<dbReference type="STRING" id="167879.CPS_4839"/>
<dbReference type="KEGG" id="cps:CPS_4839"/>
<dbReference type="eggNOG" id="COG0059">
    <property type="taxonomic scope" value="Bacteria"/>
</dbReference>
<dbReference type="HOGENOM" id="CLU_551905_0_0_6"/>
<dbReference type="UniPathway" id="UPA00047">
    <property type="reaction ID" value="UER00056"/>
</dbReference>
<dbReference type="UniPathway" id="UPA00049">
    <property type="reaction ID" value="UER00060"/>
</dbReference>
<dbReference type="Proteomes" id="UP000000547">
    <property type="component" value="Chromosome"/>
</dbReference>
<dbReference type="GO" id="GO:0005829">
    <property type="term" value="C:cytosol"/>
    <property type="evidence" value="ECO:0007669"/>
    <property type="project" value="TreeGrafter"/>
</dbReference>
<dbReference type="GO" id="GO:0004455">
    <property type="term" value="F:ketol-acid reductoisomerase activity"/>
    <property type="evidence" value="ECO:0007669"/>
    <property type="project" value="UniProtKB-UniRule"/>
</dbReference>
<dbReference type="GO" id="GO:0000287">
    <property type="term" value="F:magnesium ion binding"/>
    <property type="evidence" value="ECO:0007669"/>
    <property type="project" value="UniProtKB-UniRule"/>
</dbReference>
<dbReference type="GO" id="GO:0009097">
    <property type="term" value="P:isoleucine biosynthetic process"/>
    <property type="evidence" value="ECO:0007669"/>
    <property type="project" value="UniProtKB-UniRule"/>
</dbReference>
<dbReference type="GO" id="GO:0009099">
    <property type="term" value="P:L-valine biosynthetic process"/>
    <property type="evidence" value="ECO:0007669"/>
    <property type="project" value="UniProtKB-UniRule"/>
</dbReference>
<dbReference type="Gene3D" id="1.10.1040.10">
    <property type="entry name" value="N-(1-d-carboxylethyl)-l-norvaline Dehydrogenase, domain 2"/>
    <property type="match status" value="1"/>
</dbReference>
<dbReference type="Gene3D" id="3.40.50.720">
    <property type="entry name" value="NAD(P)-binding Rossmann-like Domain"/>
    <property type="match status" value="1"/>
</dbReference>
<dbReference type="HAMAP" id="MF_00435">
    <property type="entry name" value="IlvC"/>
    <property type="match status" value="1"/>
</dbReference>
<dbReference type="InterPro" id="IPR008927">
    <property type="entry name" value="6-PGluconate_DH-like_C_sf"/>
</dbReference>
<dbReference type="InterPro" id="IPR013328">
    <property type="entry name" value="6PGD_dom2"/>
</dbReference>
<dbReference type="InterPro" id="IPR013023">
    <property type="entry name" value="KARI"/>
</dbReference>
<dbReference type="InterPro" id="IPR000506">
    <property type="entry name" value="KARI_C"/>
</dbReference>
<dbReference type="InterPro" id="IPR013116">
    <property type="entry name" value="KARI_N"/>
</dbReference>
<dbReference type="InterPro" id="IPR036291">
    <property type="entry name" value="NAD(P)-bd_dom_sf"/>
</dbReference>
<dbReference type="NCBIfam" id="TIGR00465">
    <property type="entry name" value="ilvC"/>
    <property type="match status" value="1"/>
</dbReference>
<dbReference type="NCBIfam" id="NF003557">
    <property type="entry name" value="PRK05225.1"/>
    <property type="match status" value="1"/>
</dbReference>
<dbReference type="PANTHER" id="PTHR21371">
    <property type="entry name" value="KETOL-ACID REDUCTOISOMERASE, MITOCHONDRIAL"/>
    <property type="match status" value="1"/>
</dbReference>
<dbReference type="PANTHER" id="PTHR21371:SF1">
    <property type="entry name" value="KETOL-ACID REDUCTOISOMERASE, MITOCHONDRIAL"/>
    <property type="match status" value="1"/>
</dbReference>
<dbReference type="Pfam" id="PF01450">
    <property type="entry name" value="KARI_C"/>
    <property type="match status" value="2"/>
</dbReference>
<dbReference type="Pfam" id="PF07991">
    <property type="entry name" value="KARI_N"/>
    <property type="match status" value="1"/>
</dbReference>
<dbReference type="SUPFAM" id="SSF48179">
    <property type="entry name" value="6-phosphogluconate dehydrogenase C-terminal domain-like"/>
    <property type="match status" value="2"/>
</dbReference>
<dbReference type="SUPFAM" id="SSF51735">
    <property type="entry name" value="NAD(P)-binding Rossmann-fold domains"/>
    <property type="match status" value="1"/>
</dbReference>
<dbReference type="PROSITE" id="PS51851">
    <property type="entry name" value="KARI_C"/>
    <property type="match status" value="2"/>
</dbReference>
<dbReference type="PROSITE" id="PS51850">
    <property type="entry name" value="KARI_N"/>
    <property type="match status" value="1"/>
</dbReference>
<keyword id="KW-0028">Amino-acid biosynthesis</keyword>
<keyword id="KW-0100">Branched-chain amino acid biosynthesis</keyword>
<keyword id="KW-0460">Magnesium</keyword>
<keyword id="KW-0479">Metal-binding</keyword>
<keyword id="KW-0521">NADP</keyword>
<keyword id="KW-0560">Oxidoreductase</keyword>
<keyword id="KW-0677">Repeat</keyword>
<reference key="1">
    <citation type="journal article" date="2005" name="Proc. Natl. Acad. Sci. U.S.A.">
        <title>The psychrophilic lifestyle as revealed by the genome sequence of Colwellia psychrerythraea 34H through genomic and proteomic analyses.</title>
        <authorList>
            <person name="Methe B.A."/>
            <person name="Nelson K.E."/>
            <person name="Deming J.W."/>
            <person name="Momen B."/>
            <person name="Melamud E."/>
            <person name="Zhang X."/>
            <person name="Moult J."/>
            <person name="Madupu R."/>
            <person name="Nelson W.C."/>
            <person name="Dodson R.J."/>
            <person name="Brinkac L.M."/>
            <person name="Daugherty S.C."/>
            <person name="Durkin A.S."/>
            <person name="DeBoy R.T."/>
            <person name="Kolonay J.F."/>
            <person name="Sullivan S.A."/>
            <person name="Zhou L."/>
            <person name="Davidsen T.M."/>
            <person name="Wu M."/>
            <person name="Huston A.L."/>
            <person name="Lewis M."/>
            <person name="Weaver B."/>
            <person name="Weidman J.F."/>
            <person name="Khouri H."/>
            <person name="Utterback T.R."/>
            <person name="Feldblyum T.V."/>
            <person name="Fraser C.M."/>
        </authorList>
    </citation>
    <scope>NUCLEOTIDE SEQUENCE [LARGE SCALE GENOMIC DNA]</scope>
    <source>
        <strain>34H / ATCC BAA-681</strain>
    </source>
</reference>
<gene>
    <name evidence="1" type="primary">ilvC</name>
    <name type="ordered locus">CPS_4839</name>
</gene>
<accession>Q47UP4</accession>
<evidence type="ECO:0000255" key="1">
    <source>
        <dbReference type="HAMAP-Rule" id="MF_00435"/>
    </source>
</evidence>
<evidence type="ECO:0000255" key="2">
    <source>
        <dbReference type="PROSITE-ProRule" id="PRU01197"/>
    </source>
</evidence>
<evidence type="ECO:0000255" key="3">
    <source>
        <dbReference type="PROSITE-ProRule" id="PRU01198"/>
    </source>
</evidence>
<proteinExistence type="inferred from homology"/>